<gene>
    <name evidence="1" type="primary">recF</name>
    <name type="ordered locus">FTT_0762c</name>
</gene>
<accession>Q5NGS0</accession>
<name>RECF_FRATT</name>
<dbReference type="EMBL" id="AJ749949">
    <property type="protein sequence ID" value="CAG45395.1"/>
    <property type="molecule type" value="Genomic_DNA"/>
</dbReference>
<dbReference type="RefSeq" id="WP_003020619.1">
    <property type="nucleotide sequence ID" value="NZ_CP010290.1"/>
</dbReference>
<dbReference type="RefSeq" id="YP_169772.1">
    <property type="nucleotide sequence ID" value="NC_006570.2"/>
</dbReference>
<dbReference type="SMR" id="Q5NGS0"/>
<dbReference type="STRING" id="177416.FTT_0762c"/>
<dbReference type="DNASU" id="3191639"/>
<dbReference type="EnsemblBacteria" id="CAG45395">
    <property type="protein sequence ID" value="CAG45395"/>
    <property type="gene ID" value="FTT_0762c"/>
</dbReference>
<dbReference type="KEGG" id="ftu:FTT_0762c"/>
<dbReference type="eggNOG" id="COG1195">
    <property type="taxonomic scope" value="Bacteria"/>
</dbReference>
<dbReference type="OrthoDB" id="9803889at2"/>
<dbReference type="Proteomes" id="UP000001174">
    <property type="component" value="Chromosome"/>
</dbReference>
<dbReference type="GO" id="GO:0005737">
    <property type="term" value="C:cytoplasm"/>
    <property type="evidence" value="ECO:0007669"/>
    <property type="project" value="UniProtKB-SubCell"/>
</dbReference>
<dbReference type="GO" id="GO:0005524">
    <property type="term" value="F:ATP binding"/>
    <property type="evidence" value="ECO:0007669"/>
    <property type="project" value="UniProtKB-UniRule"/>
</dbReference>
<dbReference type="GO" id="GO:0003697">
    <property type="term" value="F:single-stranded DNA binding"/>
    <property type="evidence" value="ECO:0007669"/>
    <property type="project" value="UniProtKB-UniRule"/>
</dbReference>
<dbReference type="GO" id="GO:0006260">
    <property type="term" value="P:DNA replication"/>
    <property type="evidence" value="ECO:0007669"/>
    <property type="project" value="UniProtKB-UniRule"/>
</dbReference>
<dbReference type="GO" id="GO:0000731">
    <property type="term" value="P:DNA synthesis involved in DNA repair"/>
    <property type="evidence" value="ECO:0007669"/>
    <property type="project" value="TreeGrafter"/>
</dbReference>
<dbReference type="GO" id="GO:0006302">
    <property type="term" value="P:double-strand break repair"/>
    <property type="evidence" value="ECO:0007669"/>
    <property type="project" value="TreeGrafter"/>
</dbReference>
<dbReference type="GO" id="GO:0009432">
    <property type="term" value="P:SOS response"/>
    <property type="evidence" value="ECO:0007669"/>
    <property type="project" value="UniProtKB-UniRule"/>
</dbReference>
<dbReference type="Gene3D" id="3.40.50.300">
    <property type="entry name" value="P-loop containing nucleotide triphosphate hydrolases"/>
    <property type="match status" value="1"/>
</dbReference>
<dbReference type="Gene3D" id="1.20.1050.90">
    <property type="entry name" value="RecF/RecN/SMC, N-terminal domain"/>
    <property type="match status" value="1"/>
</dbReference>
<dbReference type="HAMAP" id="MF_00365">
    <property type="entry name" value="RecF"/>
    <property type="match status" value="1"/>
</dbReference>
<dbReference type="InterPro" id="IPR001238">
    <property type="entry name" value="DNA-binding_RecF"/>
</dbReference>
<dbReference type="InterPro" id="IPR018078">
    <property type="entry name" value="DNA-binding_RecF_CS"/>
</dbReference>
<dbReference type="InterPro" id="IPR027417">
    <property type="entry name" value="P-loop_NTPase"/>
</dbReference>
<dbReference type="InterPro" id="IPR003395">
    <property type="entry name" value="RecF/RecN/SMC_N"/>
</dbReference>
<dbReference type="InterPro" id="IPR042174">
    <property type="entry name" value="RecF_2"/>
</dbReference>
<dbReference type="NCBIfam" id="TIGR00611">
    <property type="entry name" value="recf"/>
    <property type="match status" value="1"/>
</dbReference>
<dbReference type="PANTHER" id="PTHR32182">
    <property type="entry name" value="DNA REPLICATION AND REPAIR PROTEIN RECF"/>
    <property type="match status" value="1"/>
</dbReference>
<dbReference type="PANTHER" id="PTHR32182:SF0">
    <property type="entry name" value="DNA REPLICATION AND REPAIR PROTEIN RECF"/>
    <property type="match status" value="1"/>
</dbReference>
<dbReference type="Pfam" id="PF02463">
    <property type="entry name" value="SMC_N"/>
    <property type="match status" value="1"/>
</dbReference>
<dbReference type="SUPFAM" id="SSF52540">
    <property type="entry name" value="P-loop containing nucleoside triphosphate hydrolases"/>
    <property type="match status" value="1"/>
</dbReference>
<dbReference type="PROSITE" id="PS00618">
    <property type="entry name" value="RECF_2"/>
    <property type="match status" value="1"/>
</dbReference>
<proteinExistence type="inferred from homology"/>
<feature type="chain" id="PRO_1000205492" description="DNA replication and repair protein RecF">
    <location>
        <begin position="1"/>
        <end position="349"/>
    </location>
</feature>
<feature type="binding site" evidence="1">
    <location>
        <begin position="30"/>
        <end position="37"/>
    </location>
    <ligand>
        <name>ATP</name>
        <dbReference type="ChEBI" id="CHEBI:30616"/>
    </ligand>
</feature>
<evidence type="ECO:0000255" key="1">
    <source>
        <dbReference type="HAMAP-Rule" id="MF_00365"/>
    </source>
</evidence>
<organism>
    <name type="scientific">Francisella tularensis subsp. tularensis (strain SCHU S4 / Schu 4)</name>
    <dbReference type="NCBI Taxonomy" id="177416"/>
    <lineage>
        <taxon>Bacteria</taxon>
        <taxon>Pseudomonadati</taxon>
        <taxon>Pseudomonadota</taxon>
        <taxon>Gammaproteobacteria</taxon>
        <taxon>Thiotrichales</taxon>
        <taxon>Francisellaceae</taxon>
        <taxon>Francisella</taxon>
    </lineage>
</organism>
<reference key="1">
    <citation type="journal article" date="2005" name="Nat. Genet.">
        <title>The complete genome sequence of Francisella tularensis, the causative agent of tularemia.</title>
        <authorList>
            <person name="Larsson P."/>
            <person name="Oyston P.C.F."/>
            <person name="Chain P."/>
            <person name="Chu M.C."/>
            <person name="Duffield M."/>
            <person name="Fuxelius H.-H."/>
            <person name="Garcia E."/>
            <person name="Haelltorp G."/>
            <person name="Johansson D."/>
            <person name="Isherwood K.E."/>
            <person name="Karp P.D."/>
            <person name="Larsson E."/>
            <person name="Liu Y."/>
            <person name="Michell S."/>
            <person name="Prior J."/>
            <person name="Prior R."/>
            <person name="Malfatti S."/>
            <person name="Sjoestedt A."/>
            <person name="Svensson K."/>
            <person name="Thompson N."/>
            <person name="Vergez L."/>
            <person name="Wagg J.K."/>
            <person name="Wren B.W."/>
            <person name="Lindler L.E."/>
            <person name="Andersson S.G.E."/>
            <person name="Forsman M."/>
            <person name="Titball R.W."/>
        </authorList>
    </citation>
    <scope>NUCLEOTIDE SEQUENCE [LARGE SCALE GENOMIC DNA]</scope>
    <source>
        <strain>SCHU S4 / Schu 4</strain>
    </source>
</reference>
<keyword id="KW-0067">ATP-binding</keyword>
<keyword id="KW-0963">Cytoplasm</keyword>
<keyword id="KW-0227">DNA damage</keyword>
<keyword id="KW-0234">DNA repair</keyword>
<keyword id="KW-0235">DNA replication</keyword>
<keyword id="KW-0238">DNA-binding</keyword>
<keyword id="KW-0547">Nucleotide-binding</keyword>
<keyword id="KW-1185">Reference proteome</keyword>
<keyword id="KW-0742">SOS response</keyword>
<comment type="function">
    <text evidence="1">The RecF protein is involved in DNA metabolism; it is required for DNA replication and normal SOS inducibility. RecF binds preferentially to single-stranded, linear DNA. It also seems to bind ATP.</text>
</comment>
<comment type="subcellular location">
    <subcellularLocation>
        <location evidence="1">Cytoplasm</location>
    </subcellularLocation>
</comment>
<comment type="similarity">
    <text evidence="1">Belongs to the RecF family.</text>
</comment>
<protein>
    <recommendedName>
        <fullName evidence="1">DNA replication and repair protein RecF</fullName>
    </recommendedName>
</protein>
<sequence>MYISNLRLQNFRNIPAKSFDFKNSINFIVGKNGSGKTSILESIYFLSHSRSFRSSQLNRIINHNADEFIIYTKAYNPDEITISLSRKKNSNNISKLNLEIQKNHTEITRNLPIQLINPESFNIINSGAQQRCKVLDWGAFYLDKTFLKIWQQTKFLVKQRNSALKQNYPYSYILSIDKKLCEFAEILDYKRQAYFTKLKPKIYEILSHFNPNLQLDIDYFRGWNLHKSLAQVLEESFNYDNKYKVTNHGPHKADIVLSVSHKPIQDIFSRGQQKLLICALKLAQGEIHNSENDNKCIYLIDDITSELDSIHTLTLFNYLKQLKSQVFITTTEKNKINEFIDTNSYILEI</sequence>